<feature type="chain" id="PRO_1000001280" description="LexA repressor">
    <location>
        <begin position="1"/>
        <end position="204"/>
    </location>
</feature>
<feature type="DNA-binding region" description="H-T-H motif" evidence="1">
    <location>
        <begin position="29"/>
        <end position="49"/>
    </location>
</feature>
<feature type="active site" description="For autocatalytic cleavage activity" evidence="1">
    <location>
        <position position="127"/>
    </location>
</feature>
<feature type="active site" description="For autocatalytic cleavage activity" evidence="1">
    <location>
        <position position="164"/>
    </location>
</feature>
<feature type="site" description="Cleavage; by autolysis" evidence="1">
    <location>
        <begin position="92"/>
        <end position="93"/>
    </location>
</feature>
<accession>Q24X76</accession>
<keyword id="KW-0068">Autocatalytic cleavage</keyword>
<keyword id="KW-0227">DNA damage</keyword>
<keyword id="KW-0234">DNA repair</keyword>
<keyword id="KW-0235">DNA replication</keyword>
<keyword id="KW-0238">DNA-binding</keyword>
<keyword id="KW-0378">Hydrolase</keyword>
<keyword id="KW-1185">Reference proteome</keyword>
<keyword id="KW-0678">Repressor</keyword>
<keyword id="KW-0742">SOS response</keyword>
<keyword id="KW-0804">Transcription</keyword>
<keyword id="KW-0805">Transcription regulation</keyword>
<name>LEXA_DESHY</name>
<sequence>MYPDLSQRQTDILEYIKRVIREKGYPPSVREIGDAVGLMSSSTVHGHLQTIEEKGYIRRDPTKPRAIEILDSSSDANEKKTVFVPIIGKVTAGQPILAQENIEDTFPLPVDVVNSDTVFMLRVKGESMIDAGIMDGDLILVRQQKVARNGEIVVAMIDEEATVKRFYKEKTLIRLQPENPYMEPIYSQDVTILGKVIGVFRILH</sequence>
<dbReference type="EC" id="3.4.21.88" evidence="1"/>
<dbReference type="EMBL" id="AP008230">
    <property type="protein sequence ID" value="BAE83366.1"/>
    <property type="molecule type" value="Genomic_DNA"/>
</dbReference>
<dbReference type="RefSeq" id="WP_011459777.1">
    <property type="nucleotide sequence ID" value="NC_007907.1"/>
</dbReference>
<dbReference type="SMR" id="Q24X76"/>
<dbReference type="STRING" id="138119.DSY1577"/>
<dbReference type="MEROPS" id="S24.001"/>
<dbReference type="KEGG" id="dsy:DSY1577"/>
<dbReference type="eggNOG" id="COG1974">
    <property type="taxonomic scope" value="Bacteria"/>
</dbReference>
<dbReference type="HOGENOM" id="CLU_066192_45_1_9"/>
<dbReference type="Proteomes" id="UP000001946">
    <property type="component" value="Chromosome"/>
</dbReference>
<dbReference type="GO" id="GO:0003677">
    <property type="term" value="F:DNA binding"/>
    <property type="evidence" value="ECO:0007669"/>
    <property type="project" value="UniProtKB-UniRule"/>
</dbReference>
<dbReference type="GO" id="GO:0004252">
    <property type="term" value="F:serine-type endopeptidase activity"/>
    <property type="evidence" value="ECO:0007669"/>
    <property type="project" value="UniProtKB-UniRule"/>
</dbReference>
<dbReference type="GO" id="GO:0006281">
    <property type="term" value="P:DNA repair"/>
    <property type="evidence" value="ECO:0007669"/>
    <property type="project" value="UniProtKB-UniRule"/>
</dbReference>
<dbReference type="GO" id="GO:0006260">
    <property type="term" value="P:DNA replication"/>
    <property type="evidence" value="ECO:0007669"/>
    <property type="project" value="UniProtKB-UniRule"/>
</dbReference>
<dbReference type="GO" id="GO:0045892">
    <property type="term" value="P:negative regulation of DNA-templated transcription"/>
    <property type="evidence" value="ECO:0007669"/>
    <property type="project" value="UniProtKB-UniRule"/>
</dbReference>
<dbReference type="GO" id="GO:0006508">
    <property type="term" value="P:proteolysis"/>
    <property type="evidence" value="ECO:0007669"/>
    <property type="project" value="InterPro"/>
</dbReference>
<dbReference type="GO" id="GO:0009432">
    <property type="term" value="P:SOS response"/>
    <property type="evidence" value="ECO:0007669"/>
    <property type="project" value="UniProtKB-UniRule"/>
</dbReference>
<dbReference type="CDD" id="cd06529">
    <property type="entry name" value="S24_LexA-like"/>
    <property type="match status" value="1"/>
</dbReference>
<dbReference type="FunFam" id="1.10.10.10:FF:000009">
    <property type="entry name" value="LexA repressor"/>
    <property type="match status" value="1"/>
</dbReference>
<dbReference type="FunFam" id="2.10.109.10:FF:000001">
    <property type="entry name" value="LexA repressor"/>
    <property type="match status" value="1"/>
</dbReference>
<dbReference type="Gene3D" id="2.10.109.10">
    <property type="entry name" value="Umud Fragment, subunit A"/>
    <property type="match status" value="1"/>
</dbReference>
<dbReference type="Gene3D" id="1.10.10.10">
    <property type="entry name" value="Winged helix-like DNA-binding domain superfamily/Winged helix DNA-binding domain"/>
    <property type="match status" value="1"/>
</dbReference>
<dbReference type="HAMAP" id="MF_00015">
    <property type="entry name" value="LexA"/>
    <property type="match status" value="1"/>
</dbReference>
<dbReference type="InterPro" id="IPR006200">
    <property type="entry name" value="LexA"/>
</dbReference>
<dbReference type="InterPro" id="IPR039418">
    <property type="entry name" value="LexA-like"/>
</dbReference>
<dbReference type="InterPro" id="IPR036286">
    <property type="entry name" value="LexA/Signal_pep-like_sf"/>
</dbReference>
<dbReference type="InterPro" id="IPR006199">
    <property type="entry name" value="LexA_DNA-bd_dom"/>
</dbReference>
<dbReference type="InterPro" id="IPR050077">
    <property type="entry name" value="LexA_repressor"/>
</dbReference>
<dbReference type="InterPro" id="IPR006197">
    <property type="entry name" value="Peptidase_S24_LexA"/>
</dbReference>
<dbReference type="InterPro" id="IPR015927">
    <property type="entry name" value="Peptidase_S24_S26A/B/C"/>
</dbReference>
<dbReference type="InterPro" id="IPR036388">
    <property type="entry name" value="WH-like_DNA-bd_sf"/>
</dbReference>
<dbReference type="InterPro" id="IPR036390">
    <property type="entry name" value="WH_DNA-bd_sf"/>
</dbReference>
<dbReference type="NCBIfam" id="TIGR00498">
    <property type="entry name" value="lexA"/>
    <property type="match status" value="1"/>
</dbReference>
<dbReference type="PANTHER" id="PTHR33516">
    <property type="entry name" value="LEXA REPRESSOR"/>
    <property type="match status" value="1"/>
</dbReference>
<dbReference type="PANTHER" id="PTHR33516:SF2">
    <property type="entry name" value="LEXA REPRESSOR-RELATED"/>
    <property type="match status" value="1"/>
</dbReference>
<dbReference type="Pfam" id="PF01726">
    <property type="entry name" value="LexA_DNA_bind"/>
    <property type="match status" value="1"/>
</dbReference>
<dbReference type="Pfam" id="PF00717">
    <property type="entry name" value="Peptidase_S24"/>
    <property type="match status" value="1"/>
</dbReference>
<dbReference type="PRINTS" id="PR00726">
    <property type="entry name" value="LEXASERPTASE"/>
</dbReference>
<dbReference type="SUPFAM" id="SSF51306">
    <property type="entry name" value="LexA/Signal peptidase"/>
    <property type="match status" value="1"/>
</dbReference>
<dbReference type="SUPFAM" id="SSF46785">
    <property type="entry name" value="Winged helix' DNA-binding domain"/>
    <property type="match status" value="1"/>
</dbReference>
<proteinExistence type="inferred from homology"/>
<organism>
    <name type="scientific">Desulfitobacterium hafniense (strain Y51)</name>
    <dbReference type="NCBI Taxonomy" id="138119"/>
    <lineage>
        <taxon>Bacteria</taxon>
        <taxon>Bacillati</taxon>
        <taxon>Bacillota</taxon>
        <taxon>Clostridia</taxon>
        <taxon>Eubacteriales</taxon>
        <taxon>Desulfitobacteriaceae</taxon>
        <taxon>Desulfitobacterium</taxon>
    </lineage>
</organism>
<protein>
    <recommendedName>
        <fullName evidence="1">LexA repressor</fullName>
        <ecNumber evidence="1">3.4.21.88</ecNumber>
    </recommendedName>
</protein>
<comment type="function">
    <text evidence="1">Represses a number of genes involved in the response to DNA damage (SOS response), including recA and lexA. In the presence of single-stranded DNA, RecA interacts with LexA causing an autocatalytic cleavage which disrupts the DNA-binding part of LexA, leading to derepression of the SOS regulon and eventually DNA repair.</text>
</comment>
<comment type="catalytic activity">
    <reaction evidence="1">
        <text>Hydrolysis of Ala-|-Gly bond in repressor LexA.</text>
        <dbReference type="EC" id="3.4.21.88"/>
    </reaction>
</comment>
<comment type="subunit">
    <text evidence="1">Homodimer.</text>
</comment>
<comment type="similarity">
    <text evidence="1">Belongs to the peptidase S24 family.</text>
</comment>
<gene>
    <name evidence="1" type="primary">lexA</name>
    <name type="ordered locus">DSY1577</name>
</gene>
<reference key="1">
    <citation type="journal article" date="2006" name="J. Bacteriol.">
        <title>Complete genome sequence of the dehalorespiring bacterium Desulfitobacterium hafniense Y51 and comparison with Dehalococcoides ethenogenes 195.</title>
        <authorList>
            <person name="Nonaka H."/>
            <person name="Keresztes G."/>
            <person name="Shinoda Y."/>
            <person name="Ikenaga Y."/>
            <person name="Abe M."/>
            <person name="Naito K."/>
            <person name="Inatomi K."/>
            <person name="Furukawa K."/>
            <person name="Inui M."/>
            <person name="Yukawa H."/>
        </authorList>
    </citation>
    <scope>NUCLEOTIDE SEQUENCE [LARGE SCALE GENOMIC DNA]</scope>
    <source>
        <strain>Y51</strain>
    </source>
</reference>
<evidence type="ECO:0000255" key="1">
    <source>
        <dbReference type="HAMAP-Rule" id="MF_00015"/>
    </source>
</evidence>